<name>OTC_NEIMB</name>
<keyword id="KW-0028">Amino-acid biosynthesis</keyword>
<keyword id="KW-0055">Arginine biosynthesis</keyword>
<keyword id="KW-0963">Cytoplasm</keyword>
<keyword id="KW-1185">Reference proteome</keyword>
<keyword id="KW-0808">Transferase</keyword>
<reference key="1">
    <citation type="submission" date="1999-02" db="EMBL/GenBank/DDBJ databases">
        <authorList>
            <person name="Kahler C.M."/>
            <person name="Stephens D.S."/>
        </authorList>
    </citation>
    <scope>NUCLEOTIDE SEQUENCE [GENOMIC DNA]</scope>
    <source>
        <strain>CDC 8201085 / NMB / Serogroup B</strain>
    </source>
</reference>
<reference key="2">
    <citation type="journal article" date="2000" name="Science">
        <title>Complete genome sequence of Neisseria meningitidis serogroup B strain MC58.</title>
        <authorList>
            <person name="Tettelin H."/>
            <person name="Saunders N.J."/>
            <person name="Heidelberg J.F."/>
            <person name="Jeffries A.C."/>
            <person name="Nelson K.E."/>
            <person name="Eisen J.A."/>
            <person name="Ketchum K.A."/>
            <person name="Hood D.W."/>
            <person name="Peden J.F."/>
            <person name="Dodson R.J."/>
            <person name="Nelson W.C."/>
            <person name="Gwinn M.L."/>
            <person name="DeBoy R.T."/>
            <person name="Peterson J.D."/>
            <person name="Hickey E.K."/>
            <person name="Haft D.H."/>
            <person name="Salzberg S.L."/>
            <person name="White O."/>
            <person name="Fleischmann R.D."/>
            <person name="Dougherty B.A."/>
            <person name="Mason T.M."/>
            <person name="Ciecko A."/>
            <person name="Parksey D.S."/>
            <person name="Blair E."/>
            <person name="Cittone H."/>
            <person name="Clark E.B."/>
            <person name="Cotton M.D."/>
            <person name="Utterback T.R."/>
            <person name="Khouri H.M."/>
            <person name="Qin H."/>
            <person name="Vamathevan J.J."/>
            <person name="Gill J."/>
            <person name="Scarlato V."/>
            <person name="Masignani V."/>
            <person name="Pizza M."/>
            <person name="Grandi G."/>
            <person name="Sun L."/>
            <person name="Smith H.O."/>
            <person name="Fraser C.M."/>
            <person name="Moxon E.R."/>
            <person name="Rappuoli R."/>
            <person name="Venter J.C."/>
        </authorList>
    </citation>
    <scope>NUCLEOTIDE SEQUENCE [LARGE SCALE GENOMIC DNA]</scope>
    <source>
        <strain>ATCC BAA-335 / MC58</strain>
    </source>
</reference>
<reference key="3">
    <citation type="journal article" date="1992" name="Mol. Microbiol.">
        <title>Sequence diversity within the argF, fbp and recA genes of natural isolates of Neisseria meningitidis: interspecies recombination within the argF gene.</title>
        <authorList>
            <person name="Zhou J."/>
            <person name="Spratt B.G."/>
        </authorList>
    </citation>
    <scope>NUCLEOTIDE SEQUENCE [GENOMIC DNA] OF 53-314</scope>
    <source>
        <strain>CCUG 23094 / S3446 / Serogroup B / Serotype 14</strain>
        <strain>CCUG 23103 / M470 / Serogroup B</strain>
        <strain>HF130 / Serogroup B / Serotype NT</strain>
        <strain>P63 / Serogroup B / Serotype NT / Subtype 2</strain>
    </source>
</reference>
<reference key="4">
    <citation type="journal article" date="1999" name="Mol. Biol. Evol.">
        <title>Networks and groups within the genus Neisseria: analysis of argF, recA, rho, and 16S rRNA sequences from human Neisseria species.</title>
        <authorList>
            <person name="Smith N.H."/>
            <person name="Holmes E.C."/>
            <person name="Donovan G.M."/>
            <person name="Carpenter G.A."/>
            <person name="Spratt B.G."/>
        </authorList>
    </citation>
    <scope>NUCLEOTIDE SEQUENCE [GENOMIC DNA] OF 68-299</scope>
    <source>
        <strain>NCTC 8249 / Serogroup B</strain>
    </source>
</reference>
<accession>P0DH57</accession>
<accession>Q9JYI3</accession>
<accession>Q9R812</accession>
<accession>Q9S6H2</accession>
<organism>
    <name type="scientific">Neisseria meningitidis serogroup B (strain ATCC BAA-335 / MC58)</name>
    <dbReference type="NCBI Taxonomy" id="122586"/>
    <lineage>
        <taxon>Bacteria</taxon>
        <taxon>Pseudomonadati</taxon>
        <taxon>Pseudomonadota</taxon>
        <taxon>Betaproteobacteria</taxon>
        <taxon>Neisseriales</taxon>
        <taxon>Neisseriaceae</taxon>
        <taxon>Neisseria</taxon>
    </lineage>
</organism>
<evidence type="ECO:0000250" key="1"/>
<evidence type="ECO:0000255" key="2">
    <source>
        <dbReference type="HAMAP-Rule" id="MF_01109"/>
    </source>
</evidence>
<evidence type="ECO:0000305" key="3"/>
<protein>
    <recommendedName>
        <fullName>Ornithine carbamoyltransferase</fullName>
        <shortName>OTCase</shortName>
        <ecNumber>2.1.3.3</ecNumber>
    </recommendedName>
</protein>
<feature type="chain" id="PRO_0000112965" description="Ornithine carbamoyltransferase">
    <location>
        <begin position="1"/>
        <end position="331"/>
    </location>
</feature>
<feature type="binding site" evidence="2">
    <location>
        <begin position="55"/>
        <end position="58"/>
    </location>
    <ligand>
        <name>carbamoyl phosphate</name>
        <dbReference type="ChEBI" id="CHEBI:58228"/>
    </ligand>
</feature>
<feature type="binding site" evidence="2">
    <location>
        <position position="82"/>
    </location>
    <ligand>
        <name>carbamoyl phosphate</name>
        <dbReference type="ChEBI" id="CHEBI:58228"/>
    </ligand>
</feature>
<feature type="binding site" evidence="2">
    <location>
        <position position="106"/>
    </location>
    <ligand>
        <name>carbamoyl phosphate</name>
        <dbReference type="ChEBI" id="CHEBI:58228"/>
    </ligand>
</feature>
<feature type="binding site" evidence="2">
    <location>
        <begin position="133"/>
        <end position="136"/>
    </location>
    <ligand>
        <name>carbamoyl phosphate</name>
        <dbReference type="ChEBI" id="CHEBI:58228"/>
    </ligand>
</feature>
<feature type="binding site" evidence="2">
    <location>
        <position position="166"/>
    </location>
    <ligand>
        <name>L-ornithine</name>
        <dbReference type="ChEBI" id="CHEBI:46911"/>
    </ligand>
</feature>
<feature type="binding site" evidence="2">
    <location>
        <position position="230"/>
    </location>
    <ligand>
        <name>L-ornithine</name>
        <dbReference type="ChEBI" id="CHEBI:46911"/>
    </ligand>
</feature>
<feature type="binding site" evidence="2">
    <location>
        <begin position="234"/>
        <end position="235"/>
    </location>
    <ligand>
        <name>L-ornithine</name>
        <dbReference type="ChEBI" id="CHEBI:46911"/>
    </ligand>
</feature>
<feature type="binding site" evidence="2">
    <location>
        <begin position="272"/>
        <end position="273"/>
    </location>
    <ligand>
        <name>carbamoyl phosphate</name>
        <dbReference type="ChEBI" id="CHEBI:58228"/>
    </ligand>
</feature>
<feature type="binding site" evidence="2">
    <location>
        <position position="317"/>
    </location>
    <ligand>
        <name>carbamoyl phosphate</name>
        <dbReference type="ChEBI" id="CHEBI:58228"/>
    </ligand>
</feature>
<feature type="sequence variant" description="In strain: NMB, HF130 and P63.">
    <original>I</original>
    <variation>V</variation>
    <location>
        <position position="302"/>
    </location>
</feature>
<comment type="function">
    <text evidence="1">Reversibly catalyzes the transfer of the carbamoyl group from carbamoyl phosphate (CP) to the N(epsilon) atom of ornithine (ORN) to produce L-citrulline.</text>
</comment>
<comment type="catalytic activity">
    <reaction>
        <text>carbamoyl phosphate + L-ornithine = L-citrulline + phosphate + H(+)</text>
        <dbReference type="Rhea" id="RHEA:19513"/>
        <dbReference type="ChEBI" id="CHEBI:15378"/>
        <dbReference type="ChEBI" id="CHEBI:43474"/>
        <dbReference type="ChEBI" id="CHEBI:46911"/>
        <dbReference type="ChEBI" id="CHEBI:57743"/>
        <dbReference type="ChEBI" id="CHEBI:58228"/>
        <dbReference type="EC" id="2.1.3.3"/>
    </reaction>
</comment>
<comment type="pathway">
    <text>Amino-acid biosynthesis; L-arginine biosynthesis; L-arginine from L-ornithine and carbamoyl phosphate: step 1/3.</text>
</comment>
<comment type="subcellular location">
    <subcellularLocation>
        <location evidence="1">Cytoplasm</location>
    </subcellularLocation>
</comment>
<comment type="similarity">
    <text evidence="3">Belongs to the aspartate/ornithine carbamoyltransferase superfamily. OTCase family.</text>
</comment>
<dbReference type="EC" id="2.1.3.3"/>
<dbReference type="EMBL" id="AF125563">
    <property type="protein sequence ID" value="AAD32177.1"/>
    <property type="molecule type" value="Genomic_DNA"/>
</dbReference>
<dbReference type="EMBL" id="AE002098">
    <property type="protein sequence ID" value="AAF41926.1"/>
    <property type="molecule type" value="Genomic_DNA"/>
</dbReference>
<dbReference type="EMBL" id="X64861">
    <property type="protein sequence ID" value="CAA46073.1"/>
    <property type="molecule type" value="Genomic_DNA"/>
</dbReference>
<dbReference type="EMBL" id="X64862">
    <property type="protein sequence ID" value="CAA46074.1"/>
    <property type="molecule type" value="Genomic_DNA"/>
</dbReference>
<dbReference type="EMBL" id="X64863">
    <property type="protein sequence ID" value="CAA46075.1"/>
    <property type="molecule type" value="Genomic_DNA"/>
</dbReference>
<dbReference type="EMBL" id="X64868">
    <property type="protein sequence ID" value="CAA46080.1"/>
    <property type="molecule type" value="Genomic_DNA"/>
</dbReference>
<dbReference type="EMBL" id="AJ223888">
    <property type="protein sequence ID" value="CAA11619.1"/>
    <property type="molecule type" value="Genomic_DNA"/>
</dbReference>
<dbReference type="PIR" id="E81066">
    <property type="entry name" value="E81066"/>
</dbReference>
<dbReference type="PIR" id="S24734">
    <property type="entry name" value="S24734"/>
</dbReference>
<dbReference type="RefSeq" id="NP_274579.1">
    <property type="nucleotide sequence ID" value="NC_003112.2"/>
</dbReference>
<dbReference type="RefSeq" id="WP_002212820.1">
    <property type="nucleotide sequence ID" value="NC_003112.2"/>
</dbReference>
<dbReference type="SMR" id="P0DH57"/>
<dbReference type="FunCoup" id="P0DH57">
    <property type="interactions" value="417"/>
</dbReference>
<dbReference type="STRING" id="122586.NMB1573"/>
<dbReference type="PaxDb" id="122586-NMB1573"/>
<dbReference type="KEGG" id="nme:NMB1573"/>
<dbReference type="PATRIC" id="fig|122586.8.peg.2024"/>
<dbReference type="HOGENOM" id="CLU_043846_3_1_4"/>
<dbReference type="InParanoid" id="P0DH57"/>
<dbReference type="OrthoDB" id="9802587at2"/>
<dbReference type="UniPathway" id="UPA00068">
    <property type="reaction ID" value="UER00112"/>
</dbReference>
<dbReference type="Proteomes" id="UP000000425">
    <property type="component" value="Chromosome"/>
</dbReference>
<dbReference type="GO" id="GO:0005737">
    <property type="term" value="C:cytoplasm"/>
    <property type="evidence" value="ECO:0007669"/>
    <property type="project" value="UniProtKB-SubCell"/>
</dbReference>
<dbReference type="GO" id="GO:0016597">
    <property type="term" value="F:amino acid binding"/>
    <property type="evidence" value="ECO:0007669"/>
    <property type="project" value="InterPro"/>
</dbReference>
<dbReference type="GO" id="GO:0004585">
    <property type="term" value="F:ornithine carbamoyltransferase activity"/>
    <property type="evidence" value="ECO:0000318"/>
    <property type="project" value="GO_Central"/>
</dbReference>
<dbReference type="GO" id="GO:0042450">
    <property type="term" value="P:arginine biosynthetic process via ornithine"/>
    <property type="evidence" value="ECO:0000318"/>
    <property type="project" value="GO_Central"/>
</dbReference>
<dbReference type="GO" id="GO:0019240">
    <property type="term" value="P:citrulline biosynthetic process"/>
    <property type="evidence" value="ECO:0000318"/>
    <property type="project" value="GO_Central"/>
</dbReference>
<dbReference type="GO" id="GO:0006526">
    <property type="term" value="P:L-arginine biosynthetic process"/>
    <property type="evidence" value="ECO:0007669"/>
    <property type="project" value="UniProtKB-UniRule"/>
</dbReference>
<dbReference type="FunFam" id="3.40.50.1370:FF:000004">
    <property type="entry name" value="Ornithine carbamoyltransferase"/>
    <property type="match status" value="1"/>
</dbReference>
<dbReference type="Gene3D" id="3.40.50.1370">
    <property type="entry name" value="Aspartate/ornithine carbamoyltransferase"/>
    <property type="match status" value="2"/>
</dbReference>
<dbReference type="HAMAP" id="MF_01109">
    <property type="entry name" value="OTCase"/>
    <property type="match status" value="1"/>
</dbReference>
<dbReference type="InterPro" id="IPR006132">
    <property type="entry name" value="Asp/Orn_carbamoyltranf_P-bd"/>
</dbReference>
<dbReference type="InterPro" id="IPR006130">
    <property type="entry name" value="Asp/Orn_carbamoylTrfase"/>
</dbReference>
<dbReference type="InterPro" id="IPR036901">
    <property type="entry name" value="Asp/Orn_carbamoylTrfase_sf"/>
</dbReference>
<dbReference type="InterPro" id="IPR006131">
    <property type="entry name" value="Asp_carbamoyltransf_Asp/Orn-bd"/>
</dbReference>
<dbReference type="InterPro" id="IPR002292">
    <property type="entry name" value="Orn/put_carbamltrans"/>
</dbReference>
<dbReference type="InterPro" id="IPR024904">
    <property type="entry name" value="OTCase_ArgI"/>
</dbReference>
<dbReference type="NCBIfam" id="TIGR00658">
    <property type="entry name" value="orni_carb_tr"/>
    <property type="match status" value="1"/>
</dbReference>
<dbReference type="NCBIfam" id="NF002470">
    <property type="entry name" value="PRK01713.1"/>
    <property type="match status" value="1"/>
</dbReference>
<dbReference type="PANTHER" id="PTHR45753:SF2">
    <property type="entry name" value="ORNITHINE CARBAMOYLTRANSFERASE"/>
    <property type="match status" value="1"/>
</dbReference>
<dbReference type="PANTHER" id="PTHR45753">
    <property type="entry name" value="ORNITHINE CARBAMOYLTRANSFERASE, MITOCHONDRIAL"/>
    <property type="match status" value="1"/>
</dbReference>
<dbReference type="Pfam" id="PF00185">
    <property type="entry name" value="OTCace"/>
    <property type="match status" value="1"/>
</dbReference>
<dbReference type="Pfam" id="PF02729">
    <property type="entry name" value="OTCace_N"/>
    <property type="match status" value="1"/>
</dbReference>
<dbReference type="PRINTS" id="PR00100">
    <property type="entry name" value="AOTCASE"/>
</dbReference>
<dbReference type="PRINTS" id="PR00102">
    <property type="entry name" value="OTCASE"/>
</dbReference>
<dbReference type="SUPFAM" id="SSF53671">
    <property type="entry name" value="Aspartate/ornithine carbamoyltransferase"/>
    <property type="match status" value="1"/>
</dbReference>
<dbReference type="PROSITE" id="PS00097">
    <property type="entry name" value="CARBAMOYLTRANSFERASE"/>
    <property type="match status" value="1"/>
</dbReference>
<proteinExistence type="inferred from homology"/>
<sequence>MNLKNRHFLKLLDFTPEEITAYLDLAAELKAAKKAGREIQRMKGKNIALIFEKTSTRTRCAFEVAARDQGAGVTYLEPSASQIGHKESIKDTARVLGRMYDAIEYRGFGQEVVEELAKYAGVPVFNGLTNEFHPTQMLADALTMREHSGKPLNQTAFAYVGDARYNMGNSLLILGAKLGMDVRIGAPQSLWPSEGIIAAAHAAAKETGAKITLTENAHEAVKNVDFIHTDVWVSMGEPKEVWQERIDLLKDYRVTPELMAASGNPQVKFMHCLPAFHNRETKVGEWIYETFGLNGVEVTEEIFESPASIVFDQAENRMHTIKAVMVAALGD</sequence>
<gene>
    <name type="primary">argF</name>
    <name type="ordered locus">NMB1573</name>
</gene>